<reference key="1">
    <citation type="submission" date="2008-07" db="EMBL/GenBank/DDBJ databases">
        <title>Maize full-length cDNA project.</title>
        <authorList>
            <person name="Yu Y."/>
            <person name="Currie J."/>
            <person name="Lomeli R."/>
            <person name="Angelova A."/>
            <person name="Collura K."/>
            <person name="Wissotski M."/>
            <person name="Campos D."/>
            <person name="Kudrna D."/>
            <person name="Golser W."/>
            <person name="Ashely E."/>
            <person name="Haller K."/>
            <person name="Descour A."/>
            <person name="Fernandes J."/>
            <person name="Zuccolo A."/>
            <person name="Soderlund C."/>
            <person name="Walbot V."/>
        </authorList>
    </citation>
    <scope>NUCLEOTIDE SEQUENCE [LARGE SCALE MRNA]</scope>
    <source>
        <strain>cv. B73</strain>
    </source>
</reference>
<accession>B4FM28</accession>
<dbReference type="EMBL" id="BT038166">
    <property type="protein sequence ID" value="ACF83171.1"/>
    <property type="molecule type" value="mRNA"/>
</dbReference>
<dbReference type="RefSeq" id="NP_001161740.1">
    <property type="nucleotide sequence ID" value="NM_001168268.1"/>
</dbReference>
<dbReference type="SMR" id="B4FM28"/>
<dbReference type="FunCoup" id="B4FM28">
    <property type="interactions" value="6"/>
</dbReference>
<dbReference type="EnsemblPlants" id="Zm00001eb400170_T001">
    <property type="protein sequence ID" value="Zm00001eb400170_P001"/>
    <property type="gene ID" value="Zm00001eb400170"/>
</dbReference>
<dbReference type="GeneID" id="100192929"/>
<dbReference type="Gramene" id="Zm00001eb400170_T001">
    <property type="protein sequence ID" value="Zm00001eb400170_P001"/>
    <property type="gene ID" value="Zm00001eb400170"/>
</dbReference>
<dbReference type="InParanoid" id="B4FM28"/>
<dbReference type="OrthoDB" id="667358at2759"/>
<dbReference type="Proteomes" id="UP000007305">
    <property type="component" value="Chromosome 9"/>
</dbReference>
<dbReference type="ExpressionAtlas" id="B4FM28">
    <property type="expression patterns" value="baseline and differential"/>
</dbReference>
<dbReference type="GO" id="GO:0005634">
    <property type="term" value="C:nucleus"/>
    <property type="evidence" value="ECO:0007669"/>
    <property type="project" value="UniProtKB-SubCell"/>
</dbReference>
<dbReference type="GO" id="GO:0007165">
    <property type="term" value="P:signal transduction"/>
    <property type="evidence" value="ECO:0007669"/>
    <property type="project" value="InterPro"/>
</dbReference>
<dbReference type="InterPro" id="IPR031307">
    <property type="entry name" value="Ninja_fam"/>
</dbReference>
<dbReference type="InterPro" id="IPR032310">
    <property type="entry name" value="NLS_NINJA_AFP-like"/>
</dbReference>
<dbReference type="InterPro" id="IPR032308">
    <property type="entry name" value="TDBD"/>
</dbReference>
<dbReference type="PANTHER" id="PTHR31413">
    <property type="entry name" value="AFP HOMOLOG 2"/>
    <property type="match status" value="1"/>
</dbReference>
<dbReference type="PANTHER" id="PTHR31413:SF49">
    <property type="entry name" value="NINJA-FAMILY PROTEIN MODD"/>
    <property type="match status" value="1"/>
</dbReference>
<dbReference type="Pfam" id="PF16136">
    <property type="entry name" value="NLS_NINJA_AFP"/>
    <property type="match status" value="1"/>
</dbReference>
<dbReference type="Pfam" id="PF16135">
    <property type="entry name" value="TDBD"/>
    <property type="match status" value="1"/>
</dbReference>
<proteinExistence type="evidence at transcript level"/>
<sequence>MWSPIPGTLMRTSSLPAVIEASGNDDWKKRKEAQSLKRLEVKKKRIERRNSLACNTSKEAAGQSPKEMNANTDKLVSSDETIVSANESHSSGKHLVKGLPPKYQATITSEDSSSAMRKKPNSAFKGTAITEEQNSSSSVPSSGEAISSVTAPSLPLLSLVPITATLGSREDQSILGRAGARANGMGDVERRMMQEMPGVFTKGLSNGSRVEGFLYKYSKGEVRIVCICHGSFLTPSEFVEHAGAGKVDNPLRHIVVSATPNL</sequence>
<comment type="subcellular location">
    <subcellularLocation>
        <location evidence="1">Nucleus</location>
    </subcellularLocation>
</comment>
<comment type="similarity">
    <text evidence="3">Belongs to the Ninja family.</text>
</comment>
<name>NNJA2_MAIZE</name>
<keyword id="KW-0539">Nucleus</keyword>
<keyword id="KW-1185">Reference proteome</keyword>
<evidence type="ECO:0000250" key="1"/>
<evidence type="ECO:0000256" key="2">
    <source>
        <dbReference type="SAM" id="MobiDB-lite"/>
    </source>
</evidence>
<evidence type="ECO:0000305" key="3"/>
<feature type="chain" id="PRO_0000369620" description="Ninja-family protein 2">
    <location>
        <begin position="1"/>
        <end position="262"/>
    </location>
</feature>
<feature type="region of interest" description="Disordered" evidence="2">
    <location>
        <begin position="49"/>
        <end position="70"/>
    </location>
</feature>
<organism>
    <name type="scientific">Zea mays</name>
    <name type="common">Maize</name>
    <dbReference type="NCBI Taxonomy" id="4577"/>
    <lineage>
        <taxon>Eukaryota</taxon>
        <taxon>Viridiplantae</taxon>
        <taxon>Streptophyta</taxon>
        <taxon>Embryophyta</taxon>
        <taxon>Tracheophyta</taxon>
        <taxon>Spermatophyta</taxon>
        <taxon>Magnoliopsida</taxon>
        <taxon>Liliopsida</taxon>
        <taxon>Poales</taxon>
        <taxon>Poaceae</taxon>
        <taxon>PACMAD clade</taxon>
        <taxon>Panicoideae</taxon>
        <taxon>Andropogonodae</taxon>
        <taxon>Andropogoneae</taxon>
        <taxon>Tripsacinae</taxon>
        <taxon>Zea</taxon>
    </lineage>
</organism>
<protein>
    <recommendedName>
        <fullName>Ninja-family protein 2</fullName>
    </recommendedName>
</protein>